<name>SED5_ASPFU</name>
<organism>
    <name type="scientific">Aspergillus fumigatus (strain ATCC MYA-4609 / CBS 101355 / FGSC A1100 / Af293)</name>
    <name type="common">Neosartorya fumigata</name>
    <dbReference type="NCBI Taxonomy" id="330879"/>
    <lineage>
        <taxon>Eukaryota</taxon>
        <taxon>Fungi</taxon>
        <taxon>Dikarya</taxon>
        <taxon>Ascomycota</taxon>
        <taxon>Pezizomycotina</taxon>
        <taxon>Eurotiomycetes</taxon>
        <taxon>Eurotiomycetidae</taxon>
        <taxon>Eurotiales</taxon>
        <taxon>Aspergillaceae</taxon>
        <taxon>Aspergillus</taxon>
        <taxon>Aspergillus subgen. Fumigati</taxon>
    </lineage>
</organism>
<feature type="signal peptide" evidence="2">
    <location>
        <begin position="1"/>
        <end status="unknown"/>
    </location>
</feature>
<feature type="propeptide" id="PRO_0000390754" description="Removed in mature form" evidence="1">
    <location>
        <begin status="unknown"/>
        <end position="172"/>
    </location>
</feature>
<feature type="chain" id="PRO_0000390755" description="Tripeptidyl-peptidase sed5">
    <location>
        <begin position="173"/>
        <end position="580"/>
    </location>
</feature>
<feature type="domain" description="Peptidase S53">
    <location>
        <begin position="181"/>
        <end position="567"/>
    </location>
</feature>
<feature type="region of interest" description="Disordered" evidence="3">
    <location>
        <begin position="1"/>
        <end position="21"/>
    </location>
</feature>
<feature type="active site" description="Charge relay system" evidence="1">
    <location>
        <position position="269"/>
    </location>
</feature>
<feature type="active site" description="Charge relay system" evidence="1">
    <location>
        <position position="273"/>
    </location>
</feature>
<feature type="active site" description="Charge relay system" evidence="1">
    <location>
        <position position="479"/>
    </location>
</feature>
<feature type="binding site" evidence="1">
    <location>
        <position position="523"/>
    </location>
    <ligand>
        <name>Ca(2+)</name>
        <dbReference type="ChEBI" id="CHEBI:29108"/>
    </ligand>
</feature>
<feature type="binding site" evidence="1">
    <location>
        <position position="524"/>
    </location>
    <ligand>
        <name>Ca(2+)</name>
        <dbReference type="ChEBI" id="CHEBI:29108"/>
    </ligand>
</feature>
<feature type="binding site" evidence="1">
    <location>
        <position position="543"/>
    </location>
    <ligand>
        <name>Ca(2+)</name>
        <dbReference type="ChEBI" id="CHEBI:29108"/>
    </ligand>
</feature>
<feature type="binding site" evidence="1">
    <location>
        <position position="545"/>
    </location>
    <ligand>
        <name>Ca(2+)</name>
        <dbReference type="ChEBI" id="CHEBI:29108"/>
    </ligand>
</feature>
<feature type="binding site" evidence="1">
    <location>
        <position position="547"/>
    </location>
    <ligand>
        <name>Ca(2+)</name>
        <dbReference type="ChEBI" id="CHEBI:29108"/>
    </ligand>
</feature>
<feature type="glycosylation site" description="N-linked (GlcNAc...) asparagine" evidence="2">
    <location>
        <position position="236"/>
    </location>
</feature>
<feature type="glycosylation site" description="N-linked (GlcNAc...) asparagine" evidence="2">
    <location>
        <position position="529"/>
    </location>
</feature>
<gene>
    <name type="primary">sed5</name>
    <name type="synonym">sedE</name>
    <name type="ORF">AFUA_7G06220</name>
</gene>
<evidence type="ECO:0000250" key="1"/>
<evidence type="ECO:0000255" key="2"/>
<evidence type="ECO:0000256" key="3">
    <source>
        <dbReference type="SAM" id="MobiDB-lite"/>
    </source>
</evidence>
<protein>
    <recommendedName>
        <fullName>Tripeptidyl-peptidase sed5</fullName>
        <ecNumber>3.4.14.10</ecNumber>
    </recommendedName>
    <alternativeName>
        <fullName>Sedolisin-E</fullName>
    </alternativeName>
</protein>
<reference key="1">
    <citation type="journal article" date="2005" name="Nature">
        <title>Genomic sequence of the pathogenic and allergenic filamentous fungus Aspergillus fumigatus.</title>
        <authorList>
            <person name="Nierman W.C."/>
            <person name="Pain A."/>
            <person name="Anderson M.J."/>
            <person name="Wortman J.R."/>
            <person name="Kim H.S."/>
            <person name="Arroyo J."/>
            <person name="Berriman M."/>
            <person name="Abe K."/>
            <person name="Archer D.B."/>
            <person name="Bermejo C."/>
            <person name="Bennett J.W."/>
            <person name="Bowyer P."/>
            <person name="Chen D."/>
            <person name="Collins M."/>
            <person name="Coulsen R."/>
            <person name="Davies R."/>
            <person name="Dyer P.S."/>
            <person name="Farman M.L."/>
            <person name="Fedorova N."/>
            <person name="Fedorova N.D."/>
            <person name="Feldblyum T.V."/>
            <person name="Fischer R."/>
            <person name="Fosker N."/>
            <person name="Fraser A."/>
            <person name="Garcia J.L."/>
            <person name="Garcia M.J."/>
            <person name="Goble A."/>
            <person name="Goldman G.H."/>
            <person name="Gomi K."/>
            <person name="Griffith-Jones S."/>
            <person name="Gwilliam R."/>
            <person name="Haas B.J."/>
            <person name="Haas H."/>
            <person name="Harris D.E."/>
            <person name="Horiuchi H."/>
            <person name="Huang J."/>
            <person name="Humphray S."/>
            <person name="Jimenez J."/>
            <person name="Keller N."/>
            <person name="Khouri H."/>
            <person name="Kitamoto K."/>
            <person name="Kobayashi T."/>
            <person name="Konzack S."/>
            <person name="Kulkarni R."/>
            <person name="Kumagai T."/>
            <person name="Lafton A."/>
            <person name="Latge J.-P."/>
            <person name="Li W."/>
            <person name="Lord A."/>
            <person name="Lu C."/>
            <person name="Majoros W.H."/>
            <person name="May G.S."/>
            <person name="Miller B.L."/>
            <person name="Mohamoud Y."/>
            <person name="Molina M."/>
            <person name="Monod M."/>
            <person name="Mouyna I."/>
            <person name="Mulligan S."/>
            <person name="Murphy L.D."/>
            <person name="O'Neil S."/>
            <person name="Paulsen I."/>
            <person name="Penalva M.A."/>
            <person name="Pertea M."/>
            <person name="Price C."/>
            <person name="Pritchard B.L."/>
            <person name="Quail M.A."/>
            <person name="Rabbinowitsch E."/>
            <person name="Rawlins N."/>
            <person name="Rajandream M.A."/>
            <person name="Reichard U."/>
            <person name="Renauld H."/>
            <person name="Robson G.D."/>
            <person name="Rodriguez de Cordoba S."/>
            <person name="Rodriguez-Pena J.M."/>
            <person name="Ronning C.M."/>
            <person name="Rutter S."/>
            <person name="Salzberg S.L."/>
            <person name="Sanchez M."/>
            <person name="Sanchez-Ferrero J.C."/>
            <person name="Saunders D."/>
            <person name="Seeger K."/>
            <person name="Squares R."/>
            <person name="Squares S."/>
            <person name="Takeuchi M."/>
            <person name="Tekaia F."/>
            <person name="Turner G."/>
            <person name="Vazquez de Aldana C.R."/>
            <person name="Weidman J."/>
            <person name="White O."/>
            <person name="Woodward J.R."/>
            <person name="Yu J.-H."/>
            <person name="Fraser C.M."/>
            <person name="Galagan J.E."/>
            <person name="Asai K."/>
            <person name="Machida M."/>
            <person name="Hall N."/>
            <person name="Barrell B.G."/>
            <person name="Denning D.W."/>
        </authorList>
    </citation>
    <scope>NUCLEOTIDE SEQUENCE [LARGE SCALE GENOMIC DNA]</scope>
    <source>
        <strain>ATCC MYA-4609 / CBS 101355 / FGSC A1100 / Af293</strain>
    </source>
</reference>
<sequence>MYPLDGSARPHPPGTTRLNSVEPDKQIGFTVLVRPQTGAPRLPDLAQWQAIPIAERQFLSTAGFERTYGSSEDDIVSVASFLEKAGMTIRSRHAGAGTVEVQAKTCQIHSVFAVQLLYYRGQLRPAARKRRDDKQPAEETYIGFEGCISLPAALHDKVIHIFGLDTRTFGASGGYSGDPPRAQRLIVAELAALYGFPAGVDASQQTIGIFSGEGNDDKGQSLSNYRPADVAAYFNNQTVGYNRAPTVVPVSLTVADQTYRNDPDHPTQELSQDIMTAATIAQGCTVNVYFSDLTEQGWLAFLTRVLFPQGEEKRPTIVSISWTMYDEQTYRDRLSFLFQRLAVVGTSVFAIAGDWGANNNIIDGQPHVGWPGSDPWVTCVGGTVVGNVRSSGAFTEHAWSDRDNPDSQFTIDGHLGVTGGGMSRVFATPPYQLSSGISAVTDCNGERWTGGRFIPDITGMVGFRGFIVNGKRNYFIGTSCSTPLYAGLFAALASALGGGGEGGVLFGPLNTVLYQIDRGVYRDITFGHNDSGDMPACAYFAAGEGYDTVSGLGSVDGRRTLEELRRIYWPKTKGFGCFRN</sequence>
<comment type="function">
    <text evidence="1">Secreted tripeptidyl-peptidase which degrades proteins at acidic pHs and is involved in virulence.</text>
</comment>
<comment type="catalytic activity">
    <reaction>
        <text>Release of an N-terminal tripeptide from a polypeptide.</text>
        <dbReference type="EC" id="3.4.14.10"/>
    </reaction>
</comment>
<comment type="cofactor">
    <cofactor evidence="1">
        <name>Ca(2+)</name>
        <dbReference type="ChEBI" id="CHEBI:29108"/>
    </cofactor>
    <text evidence="1">Binds 1 Ca(2+) ion per subunit.</text>
</comment>
<comment type="subcellular location">
    <subcellularLocation>
        <location evidence="1">Secreted</location>
        <location evidence="1">Extracellular space</location>
    </subcellularLocation>
</comment>
<proteinExistence type="inferred from homology"/>
<dbReference type="EC" id="3.4.14.10"/>
<dbReference type="EMBL" id="AAHF01000009">
    <property type="protein sequence ID" value="EAL86850.2"/>
    <property type="molecule type" value="Genomic_DNA"/>
</dbReference>
<dbReference type="RefSeq" id="XP_748888.2">
    <property type="nucleotide sequence ID" value="XM_743795.2"/>
</dbReference>
<dbReference type="SMR" id="Q4WGU1"/>
<dbReference type="STRING" id="330879.Q4WGU1"/>
<dbReference type="GlyCosmos" id="Q4WGU1">
    <property type="glycosylation" value="2 sites, No reported glycans"/>
</dbReference>
<dbReference type="EnsemblFungi" id="EAL86850">
    <property type="protein sequence ID" value="EAL86850"/>
    <property type="gene ID" value="AFUA_7G06220"/>
</dbReference>
<dbReference type="GeneID" id="3506319"/>
<dbReference type="KEGG" id="afm:AFUA_7G06220"/>
<dbReference type="VEuPathDB" id="FungiDB:Afu7g06220"/>
<dbReference type="HOGENOM" id="CLU_012501_2_0_1"/>
<dbReference type="InParanoid" id="Q4WGU1"/>
<dbReference type="OMA" id="YFIGTSC"/>
<dbReference type="OrthoDB" id="409122at2759"/>
<dbReference type="Proteomes" id="UP000002530">
    <property type="component" value="Chromosome 7"/>
</dbReference>
<dbReference type="GO" id="GO:0005576">
    <property type="term" value="C:extracellular region"/>
    <property type="evidence" value="ECO:0007669"/>
    <property type="project" value="UniProtKB-SubCell"/>
</dbReference>
<dbReference type="GO" id="GO:0004175">
    <property type="term" value="F:endopeptidase activity"/>
    <property type="evidence" value="ECO:0000318"/>
    <property type="project" value="GO_Central"/>
</dbReference>
<dbReference type="GO" id="GO:0046872">
    <property type="term" value="F:metal ion binding"/>
    <property type="evidence" value="ECO:0007669"/>
    <property type="project" value="UniProtKB-KW"/>
</dbReference>
<dbReference type="GO" id="GO:0004252">
    <property type="term" value="F:serine-type endopeptidase activity"/>
    <property type="evidence" value="ECO:0007669"/>
    <property type="project" value="InterPro"/>
</dbReference>
<dbReference type="GO" id="GO:0008240">
    <property type="term" value="F:tripeptidyl-peptidase activity"/>
    <property type="evidence" value="ECO:0000318"/>
    <property type="project" value="GO_Central"/>
</dbReference>
<dbReference type="GO" id="GO:0006508">
    <property type="term" value="P:proteolysis"/>
    <property type="evidence" value="ECO:0000318"/>
    <property type="project" value="GO_Central"/>
</dbReference>
<dbReference type="CDD" id="cd04056">
    <property type="entry name" value="Peptidases_S53"/>
    <property type="match status" value="1"/>
</dbReference>
<dbReference type="CDD" id="cd11377">
    <property type="entry name" value="Pro-peptidase_S53"/>
    <property type="match status" value="1"/>
</dbReference>
<dbReference type="FunFam" id="3.40.50.200:FF:000052">
    <property type="entry name" value="Serine protease, putative"/>
    <property type="match status" value="1"/>
</dbReference>
<dbReference type="Gene3D" id="3.40.50.200">
    <property type="entry name" value="Peptidase S8/S53 domain"/>
    <property type="match status" value="1"/>
</dbReference>
<dbReference type="InterPro" id="IPR036852">
    <property type="entry name" value="Peptidase_S8/S53_dom_sf"/>
</dbReference>
<dbReference type="InterPro" id="IPR023828">
    <property type="entry name" value="Peptidase_S8_Ser-AS"/>
</dbReference>
<dbReference type="InterPro" id="IPR015366">
    <property type="entry name" value="S53_propep"/>
</dbReference>
<dbReference type="InterPro" id="IPR030400">
    <property type="entry name" value="Sedolisin_dom"/>
</dbReference>
<dbReference type="InterPro" id="IPR050819">
    <property type="entry name" value="Tripeptidyl-peptidase_I"/>
</dbReference>
<dbReference type="PANTHER" id="PTHR14218">
    <property type="entry name" value="PROTEASE S8 TRIPEPTIDYL PEPTIDASE I CLN2"/>
    <property type="match status" value="1"/>
</dbReference>
<dbReference type="PANTHER" id="PTHR14218:SF32">
    <property type="entry name" value="TRIPEPTIDYL PEPTIDASE SED3 (AFU_ORTHOLOGUE AFUA_3G08930)"/>
    <property type="match status" value="1"/>
</dbReference>
<dbReference type="Pfam" id="PF09286">
    <property type="entry name" value="Pro-kuma_activ"/>
    <property type="match status" value="1"/>
</dbReference>
<dbReference type="SMART" id="SM00944">
    <property type="entry name" value="Pro-kuma_activ"/>
    <property type="match status" value="1"/>
</dbReference>
<dbReference type="SUPFAM" id="SSF54897">
    <property type="entry name" value="Protease propeptides/inhibitors"/>
    <property type="match status" value="1"/>
</dbReference>
<dbReference type="SUPFAM" id="SSF52743">
    <property type="entry name" value="Subtilisin-like"/>
    <property type="match status" value="1"/>
</dbReference>
<dbReference type="PROSITE" id="PS51695">
    <property type="entry name" value="SEDOLISIN"/>
    <property type="match status" value="1"/>
</dbReference>
<keyword id="KW-0106">Calcium</keyword>
<keyword id="KW-0325">Glycoprotein</keyword>
<keyword id="KW-0378">Hydrolase</keyword>
<keyword id="KW-0479">Metal-binding</keyword>
<keyword id="KW-0645">Protease</keyword>
<keyword id="KW-1185">Reference proteome</keyword>
<keyword id="KW-0964">Secreted</keyword>
<keyword id="KW-0720">Serine protease</keyword>
<keyword id="KW-0732">Signal</keyword>
<keyword id="KW-0843">Virulence</keyword>
<keyword id="KW-0865">Zymogen</keyword>
<accession>Q4WGU1</accession>